<keyword id="KW-0028">Amino-acid biosynthesis</keyword>
<keyword id="KW-0368">Histidine biosynthesis</keyword>
<keyword id="KW-0378">Hydrolase</keyword>
<keyword id="KW-0486">Methionine biosynthesis</keyword>
<keyword id="KW-0511">Multifunctional enzyme</keyword>
<keyword id="KW-0521">NADP</keyword>
<keyword id="KW-0554">One-carbon metabolism</keyword>
<keyword id="KW-0560">Oxidoreductase</keyword>
<keyword id="KW-0658">Purine biosynthesis</keyword>
<sequence length="277" mass="30351">MDKILSGKTVAIDIKGQIKSYTEELKASGKSLKISSILVGDDGGSVYYQNFQEKLANNLGIDFEKIKLDESISEENLKLKIEELNKDDSVNGIMLLLPLPKHIDERVVTNLIDADKDLDCLSEVSVGRFYKGEKCFMPCTPNSVITLLKAYNIEIEGKEVVIIGRSNIVGKPLFQMFLNENATVTVCHSKTKNLKEVCKRADILVVAIGRANFIDSSYVREGAVVIDVGTSEVNGKITGDVNFDDVYEKASLITPVPGGVGSLTTTLLLKNVCKELD</sequence>
<protein>
    <recommendedName>
        <fullName evidence="1">Bifunctional protein FolD</fullName>
    </recommendedName>
    <domain>
        <recommendedName>
            <fullName evidence="1">Methylenetetrahydrofolate dehydrogenase</fullName>
            <ecNumber evidence="1">1.5.1.5</ecNumber>
        </recommendedName>
    </domain>
    <domain>
        <recommendedName>
            <fullName evidence="1">Methenyltetrahydrofolate cyclohydrolase</fullName>
            <ecNumber evidence="1">3.5.4.9</ecNumber>
        </recommendedName>
    </domain>
</protein>
<accession>Q0SS01</accession>
<name>FOLD_CLOPS</name>
<dbReference type="EC" id="1.5.1.5" evidence="1"/>
<dbReference type="EC" id="3.5.4.9" evidence="1"/>
<dbReference type="EMBL" id="CP000312">
    <property type="protein sequence ID" value="ABG87674.1"/>
    <property type="molecule type" value="Genomic_DNA"/>
</dbReference>
<dbReference type="RefSeq" id="WP_011592692.1">
    <property type="nucleotide sequence ID" value="NC_008262.1"/>
</dbReference>
<dbReference type="SMR" id="Q0SS01"/>
<dbReference type="KEGG" id="cpr:CPR_1791"/>
<dbReference type="UniPathway" id="UPA00193"/>
<dbReference type="Proteomes" id="UP000001824">
    <property type="component" value="Chromosome"/>
</dbReference>
<dbReference type="GO" id="GO:0005829">
    <property type="term" value="C:cytosol"/>
    <property type="evidence" value="ECO:0007669"/>
    <property type="project" value="TreeGrafter"/>
</dbReference>
<dbReference type="GO" id="GO:0004477">
    <property type="term" value="F:methenyltetrahydrofolate cyclohydrolase activity"/>
    <property type="evidence" value="ECO:0007669"/>
    <property type="project" value="UniProtKB-UniRule"/>
</dbReference>
<dbReference type="GO" id="GO:0004488">
    <property type="term" value="F:methylenetetrahydrofolate dehydrogenase (NADP+) activity"/>
    <property type="evidence" value="ECO:0007669"/>
    <property type="project" value="UniProtKB-UniRule"/>
</dbReference>
<dbReference type="GO" id="GO:0000105">
    <property type="term" value="P:L-histidine biosynthetic process"/>
    <property type="evidence" value="ECO:0007669"/>
    <property type="project" value="UniProtKB-KW"/>
</dbReference>
<dbReference type="GO" id="GO:0009086">
    <property type="term" value="P:methionine biosynthetic process"/>
    <property type="evidence" value="ECO:0007669"/>
    <property type="project" value="UniProtKB-KW"/>
</dbReference>
<dbReference type="GO" id="GO:0006164">
    <property type="term" value="P:purine nucleotide biosynthetic process"/>
    <property type="evidence" value="ECO:0007669"/>
    <property type="project" value="UniProtKB-KW"/>
</dbReference>
<dbReference type="GO" id="GO:0035999">
    <property type="term" value="P:tetrahydrofolate interconversion"/>
    <property type="evidence" value="ECO:0007669"/>
    <property type="project" value="UniProtKB-UniRule"/>
</dbReference>
<dbReference type="CDD" id="cd01080">
    <property type="entry name" value="NAD_bind_m-THF_DH_Cyclohyd"/>
    <property type="match status" value="1"/>
</dbReference>
<dbReference type="FunFam" id="3.40.50.720:FF:000094">
    <property type="entry name" value="Bifunctional protein FolD"/>
    <property type="match status" value="1"/>
</dbReference>
<dbReference type="FunFam" id="3.40.50.10860:FF:000005">
    <property type="entry name" value="C-1-tetrahydrofolate synthase, cytoplasmic, putative"/>
    <property type="match status" value="1"/>
</dbReference>
<dbReference type="Gene3D" id="3.40.50.10860">
    <property type="entry name" value="Leucine Dehydrogenase, chain A, domain 1"/>
    <property type="match status" value="1"/>
</dbReference>
<dbReference type="Gene3D" id="3.40.50.720">
    <property type="entry name" value="NAD(P)-binding Rossmann-like Domain"/>
    <property type="match status" value="1"/>
</dbReference>
<dbReference type="HAMAP" id="MF_01576">
    <property type="entry name" value="THF_DHG_CYH"/>
    <property type="match status" value="1"/>
</dbReference>
<dbReference type="InterPro" id="IPR046346">
    <property type="entry name" value="Aminoacid_DH-like_N_sf"/>
</dbReference>
<dbReference type="InterPro" id="IPR036291">
    <property type="entry name" value="NAD(P)-bd_dom_sf"/>
</dbReference>
<dbReference type="InterPro" id="IPR000672">
    <property type="entry name" value="THF_DH/CycHdrlase"/>
</dbReference>
<dbReference type="InterPro" id="IPR020630">
    <property type="entry name" value="THF_DH/CycHdrlase_cat_dom"/>
</dbReference>
<dbReference type="InterPro" id="IPR020631">
    <property type="entry name" value="THF_DH/CycHdrlase_NAD-bd_dom"/>
</dbReference>
<dbReference type="NCBIfam" id="NF010769">
    <property type="entry name" value="PRK14172.1"/>
    <property type="match status" value="1"/>
</dbReference>
<dbReference type="PANTHER" id="PTHR48099:SF5">
    <property type="entry name" value="C-1-TETRAHYDROFOLATE SYNTHASE, CYTOPLASMIC"/>
    <property type="match status" value="1"/>
</dbReference>
<dbReference type="PANTHER" id="PTHR48099">
    <property type="entry name" value="C-1-TETRAHYDROFOLATE SYNTHASE, CYTOPLASMIC-RELATED"/>
    <property type="match status" value="1"/>
</dbReference>
<dbReference type="Pfam" id="PF00763">
    <property type="entry name" value="THF_DHG_CYH"/>
    <property type="match status" value="1"/>
</dbReference>
<dbReference type="Pfam" id="PF02882">
    <property type="entry name" value="THF_DHG_CYH_C"/>
    <property type="match status" value="1"/>
</dbReference>
<dbReference type="PRINTS" id="PR00085">
    <property type="entry name" value="THFDHDRGNASE"/>
</dbReference>
<dbReference type="SUPFAM" id="SSF53223">
    <property type="entry name" value="Aminoacid dehydrogenase-like, N-terminal domain"/>
    <property type="match status" value="1"/>
</dbReference>
<dbReference type="SUPFAM" id="SSF51735">
    <property type="entry name" value="NAD(P)-binding Rossmann-fold domains"/>
    <property type="match status" value="1"/>
</dbReference>
<gene>
    <name evidence="1" type="primary">folD</name>
    <name type="ordered locus">CPR_1791</name>
</gene>
<feature type="chain" id="PRO_0000268319" description="Bifunctional protein FolD">
    <location>
        <begin position="1"/>
        <end position="277"/>
    </location>
</feature>
<feature type="binding site" evidence="1">
    <location>
        <begin position="164"/>
        <end position="166"/>
    </location>
    <ligand>
        <name>NADP(+)</name>
        <dbReference type="ChEBI" id="CHEBI:58349"/>
    </ligand>
</feature>
<feature type="binding site" evidence="1">
    <location>
        <position position="189"/>
    </location>
    <ligand>
        <name>NADP(+)</name>
        <dbReference type="ChEBI" id="CHEBI:58349"/>
    </ligand>
</feature>
<feature type="binding site" evidence="1">
    <location>
        <position position="230"/>
    </location>
    <ligand>
        <name>NADP(+)</name>
        <dbReference type="ChEBI" id="CHEBI:58349"/>
    </ligand>
</feature>
<organism>
    <name type="scientific">Clostridium perfringens (strain SM101 / Type A)</name>
    <dbReference type="NCBI Taxonomy" id="289380"/>
    <lineage>
        <taxon>Bacteria</taxon>
        <taxon>Bacillati</taxon>
        <taxon>Bacillota</taxon>
        <taxon>Clostridia</taxon>
        <taxon>Eubacteriales</taxon>
        <taxon>Clostridiaceae</taxon>
        <taxon>Clostridium</taxon>
    </lineage>
</organism>
<proteinExistence type="inferred from homology"/>
<comment type="function">
    <text evidence="1">Catalyzes the oxidation of 5,10-methylenetetrahydrofolate to 5,10-methenyltetrahydrofolate and then the hydrolysis of 5,10-methenyltetrahydrofolate to 10-formyltetrahydrofolate.</text>
</comment>
<comment type="catalytic activity">
    <reaction evidence="1">
        <text>(6R)-5,10-methylene-5,6,7,8-tetrahydrofolate + NADP(+) = (6R)-5,10-methenyltetrahydrofolate + NADPH</text>
        <dbReference type="Rhea" id="RHEA:22812"/>
        <dbReference type="ChEBI" id="CHEBI:15636"/>
        <dbReference type="ChEBI" id="CHEBI:57455"/>
        <dbReference type="ChEBI" id="CHEBI:57783"/>
        <dbReference type="ChEBI" id="CHEBI:58349"/>
        <dbReference type="EC" id="1.5.1.5"/>
    </reaction>
</comment>
<comment type="catalytic activity">
    <reaction evidence="1">
        <text>(6R)-5,10-methenyltetrahydrofolate + H2O = (6R)-10-formyltetrahydrofolate + H(+)</text>
        <dbReference type="Rhea" id="RHEA:23700"/>
        <dbReference type="ChEBI" id="CHEBI:15377"/>
        <dbReference type="ChEBI" id="CHEBI:15378"/>
        <dbReference type="ChEBI" id="CHEBI:57455"/>
        <dbReference type="ChEBI" id="CHEBI:195366"/>
        <dbReference type="EC" id="3.5.4.9"/>
    </reaction>
</comment>
<comment type="pathway">
    <text evidence="1">One-carbon metabolism; tetrahydrofolate interconversion.</text>
</comment>
<comment type="subunit">
    <text evidence="1">Homodimer.</text>
</comment>
<comment type="similarity">
    <text evidence="1">Belongs to the tetrahydrofolate dehydrogenase/cyclohydrolase family.</text>
</comment>
<reference key="1">
    <citation type="journal article" date="2006" name="Genome Res.">
        <title>Skewed genomic variability in strains of the toxigenic bacterial pathogen, Clostridium perfringens.</title>
        <authorList>
            <person name="Myers G.S.A."/>
            <person name="Rasko D.A."/>
            <person name="Cheung J.K."/>
            <person name="Ravel J."/>
            <person name="Seshadri R."/>
            <person name="DeBoy R.T."/>
            <person name="Ren Q."/>
            <person name="Varga J."/>
            <person name="Awad M.M."/>
            <person name="Brinkac L.M."/>
            <person name="Daugherty S.C."/>
            <person name="Haft D.H."/>
            <person name="Dodson R.J."/>
            <person name="Madupu R."/>
            <person name="Nelson W.C."/>
            <person name="Rosovitz M.J."/>
            <person name="Sullivan S.A."/>
            <person name="Khouri H."/>
            <person name="Dimitrov G.I."/>
            <person name="Watkins K.L."/>
            <person name="Mulligan S."/>
            <person name="Benton J."/>
            <person name="Radune D."/>
            <person name="Fisher D.J."/>
            <person name="Atkins H.S."/>
            <person name="Hiscox T."/>
            <person name="Jost B.H."/>
            <person name="Billington S.J."/>
            <person name="Songer J.G."/>
            <person name="McClane B.A."/>
            <person name="Titball R.W."/>
            <person name="Rood J.I."/>
            <person name="Melville S.B."/>
            <person name="Paulsen I.T."/>
        </authorList>
    </citation>
    <scope>NUCLEOTIDE SEQUENCE [LARGE SCALE GENOMIC DNA]</scope>
    <source>
        <strain>SM101 / Type A</strain>
    </source>
</reference>
<evidence type="ECO:0000255" key="1">
    <source>
        <dbReference type="HAMAP-Rule" id="MF_01576"/>
    </source>
</evidence>